<keyword id="KW-0025">Alternative splicing</keyword>
<keyword id="KW-0217">Developmental protein</keyword>
<keyword id="KW-0221">Differentiation</keyword>
<keyword id="KW-0524">Neurogenesis</keyword>
<keyword id="KW-1185">Reference proteome</keyword>
<keyword id="KW-0677">Repeat</keyword>
<keyword id="KW-0687">Ribonucleoprotein</keyword>
<keyword id="KW-0694">RNA-binding</keyword>
<gene>
    <name type="primary">elavl3</name>
    <name evidence="10" type="synonym">elrC</name>
</gene>
<organism>
    <name type="scientific">Xenopus laevis</name>
    <name type="common">African clawed frog</name>
    <dbReference type="NCBI Taxonomy" id="8355"/>
    <lineage>
        <taxon>Eukaryota</taxon>
        <taxon>Metazoa</taxon>
        <taxon>Chordata</taxon>
        <taxon>Craniata</taxon>
        <taxon>Vertebrata</taxon>
        <taxon>Euteleostomi</taxon>
        <taxon>Amphibia</taxon>
        <taxon>Batrachia</taxon>
        <taxon>Anura</taxon>
        <taxon>Pipoidea</taxon>
        <taxon>Pipidae</taxon>
        <taxon>Xenopodinae</taxon>
        <taxon>Xenopus</taxon>
        <taxon>Xenopus</taxon>
    </lineage>
</organism>
<protein>
    <recommendedName>
        <fullName>ELAV-like protein 3</fullName>
    </recommendedName>
    <alternativeName>
        <fullName evidence="11">Protein ElrC</fullName>
    </alternativeName>
</protein>
<evidence type="ECO:0000250" key="1">
    <source>
        <dbReference type="UniProtKB" id="Q60900"/>
    </source>
</evidence>
<evidence type="ECO:0000255" key="2"/>
<evidence type="ECO:0000255" key="3">
    <source>
        <dbReference type="PROSITE-ProRule" id="PRU00176"/>
    </source>
</evidence>
<evidence type="ECO:0000269" key="4">
    <source>
    </source>
</evidence>
<evidence type="ECO:0000269" key="5">
    <source>
    </source>
</evidence>
<evidence type="ECO:0000269" key="6">
    <source>
    </source>
</evidence>
<evidence type="ECO:0000269" key="7">
    <source>
    </source>
</evidence>
<evidence type="ECO:0000303" key="8">
    <source ref="2"/>
</evidence>
<evidence type="ECO:0000305" key="9"/>
<evidence type="ECO:0000312" key="10">
    <source>
        <dbReference type="EMBL" id="AAA96944.1"/>
    </source>
</evidence>
<evidence type="ECO:0000312" key="11">
    <source>
        <dbReference type="EMBL" id="AAI69769.1"/>
    </source>
</evidence>
<dbReference type="EMBL" id="U17598">
    <property type="protein sequence ID" value="AAA96944.1"/>
    <property type="molecule type" value="mRNA"/>
</dbReference>
<dbReference type="EMBL" id="BC169769">
    <property type="protein sequence ID" value="AAI69769.1"/>
    <property type="molecule type" value="mRNA"/>
</dbReference>
<dbReference type="PIR" id="I51677">
    <property type="entry name" value="I51677"/>
</dbReference>
<dbReference type="RefSeq" id="NP_001084080.1">
    <molecule id="Q91584-1"/>
    <property type="nucleotide sequence ID" value="NM_001090611.1"/>
</dbReference>
<dbReference type="RefSeq" id="XP_018097510.1">
    <molecule id="Q91584-2"/>
    <property type="nucleotide sequence ID" value="XM_018242021.1"/>
</dbReference>
<dbReference type="SMR" id="Q91584"/>
<dbReference type="GeneID" id="399293"/>
<dbReference type="KEGG" id="xla:399293"/>
<dbReference type="AGR" id="Xenbase:XB-GENE-866009"/>
<dbReference type="CTD" id="399293"/>
<dbReference type="Xenbase" id="XB-GENE-866009">
    <property type="gene designation" value="elavl3.L"/>
</dbReference>
<dbReference type="OrthoDB" id="266020at2759"/>
<dbReference type="Proteomes" id="UP000186698">
    <property type="component" value="Chromosome 3L"/>
</dbReference>
<dbReference type="Bgee" id="399293">
    <property type="expression patterns" value="Expressed in brain and 5 other cell types or tissues"/>
</dbReference>
<dbReference type="GO" id="GO:1990904">
    <property type="term" value="C:ribonucleoprotein complex"/>
    <property type="evidence" value="ECO:0007669"/>
    <property type="project" value="UniProtKB-KW"/>
</dbReference>
<dbReference type="GO" id="GO:0003723">
    <property type="term" value="F:RNA binding"/>
    <property type="evidence" value="ECO:0007669"/>
    <property type="project" value="UniProtKB-KW"/>
</dbReference>
<dbReference type="GO" id="GO:0030154">
    <property type="term" value="P:cell differentiation"/>
    <property type="evidence" value="ECO:0007669"/>
    <property type="project" value="UniProtKB-KW"/>
</dbReference>
<dbReference type="GO" id="GO:0007399">
    <property type="term" value="P:nervous system development"/>
    <property type="evidence" value="ECO:0007669"/>
    <property type="project" value="UniProtKB-KW"/>
</dbReference>
<dbReference type="CDD" id="cd12772">
    <property type="entry name" value="RRM1_HuC"/>
    <property type="match status" value="1"/>
</dbReference>
<dbReference type="CDD" id="cd12776">
    <property type="entry name" value="RRM2_HuC"/>
    <property type="match status" value="1"/>
</dbReference>
<dbReference type="CDD" id="cd12655">
    <property type="entry name" value="RRM3_HuC"/>
    <property type="match status" value="1"/>
</dbReference>
<dbReference type="FunFam" id="3.30.70.330:FF:000006">
    <property type="entry name" value="ELAV-like 3"/>
    <property type="match status" value="1"/>
</dbReference>
<dbReference type="FunFam" id="3.30.70.330:FF:000005">
    <property type="entry name" value="ELAV-like protein"/>
    <property type="match status" value="1"/>
</dbReference>
<dbReference type="FunFam" id="3.30.70.330:FF:000017">
    <property type="entry name" value="ELAV-like protein"/>
    <property type="match status" value="1"/>
</dbReference>
<dbReference type="Gene3D" id="3.30.70.330">
    <property type="match status" value="3"/>
</dbReference>
<dbReference type="InterPro" id="IPR006548">
    <property type="entry name" value="ELAD_HU_SF"/>
</dbReference>
<dbReference type="InterPro" id="IPR034915">
    <property type="entry name" value="HuC_RRM3"/>
</dbReference>
<dbReference type="InterPro" id="IPR002343">
    <property type="entry name" value="Hud_Sxl_RNA"/>
</dbReference>
<dbReference type="InterPro" id="IPR012677">
    <property type="entry name" value="Nucleotide-bd_a/b_plait_sf"/>
</dbReference>
<dbReference type="InterPro" id="IPR035979">
    <property type="entry name" value="RBD_domain_sf"/>
</dbReference>
<dbReference type="InterPro" id="IPR000504">
    <property type="entry name" value="RRM_dom"/>
</dbReference>
<dbReference type="InterPro" id="IPR003954">
    <property type="entry name" value="RRM_dom_euk"/>
</dbReference>
<dbReference type="NCBIfam" id="TIGR01661">
    <property type="entry name" value="ELAV_HUD_SF"/>
    <property type="match status" value="1"/>
</dbReference>
<dbReference type="PANTHER" id="PTHR10352">
    <property type="entry name" value="EUKARYOTIC TRANSLATION INITIATION FACTOR 3 SUBUNIT G"/>
    <property type="match status" value="1"/>
</dbReference>
<dbReference type="Pfam" id="PF00076">
    <property type="entry name" value="RRM_1"/>
    <property type="match status" value="3"/>
</dbReference>
<dbReference type="PRINTS" id="PR00961">
    <property type="entry name" value="HUDSXLRNA"/>
</dbReference>
<dbReference type="SMART" id="SM00360">
    <property type="entry name" value="RRM"/>
    <property type="match status" value="3"/>
</dbReference>
<dbReference type="SMART" id="SM00361">
    <property type="entry name" value="RRM_1"/>
    <property type="match status" value="2"/>
</dbReference>
<dbReference type="SUPFAM" id="SSF54928">
    <property type="entry name" value="RNA-binding domain, RBD"/>
    <property type="match status" value="2"/>
</dbReference>
<dbReference type="PROSITE" id="PS50102">
    <property type="entry name" value="RRM"/>
    <property type="match status" value="3"/>
</dbReference>
<name>ELAV3_XENLA</name>
<sequence length="348" mass="38143">MVTIISTMETQANNGPGCVGILNGTNGEADDSKTNLIVNYLPQNMTQEEFKSLFGSIGEIESCKLVRDKITGQSLGYGFVNYVDPNDADKAINTLNGLKLQTKTIKVSYARPSSASIRDANLYVSSLPKTMNQKEMEQLFSQYGRIITSRILVDQVTGVSRGVGFIRFDKRIEAEEAIKGLNGQKPLGASEPITVKFANNPSQKTGQALLTHLYQTTARRYTGPLHHQTQRFSPLSILPRFSPITIDSVTNLAGVSLTGPTTAGWCIFVYNLSPEADESVLWQLFGPFGAVTNVKVIRDFTTNKCKGFGFVTMTNYDEAAMAIASLNGYRLGDRVLQVSFKTSKQHKA</sequence>
<comment type="function">
    <text evidence="1">RNA-binding protein that binds to AU-rich element (ARE) sequences of target mRNAs. May also bind poly-A tracts via RRM 3. May be involved in neuronal differentiation and maintenance (By similarity).</text>
</comment>
<comment type="alternative products">
    <event type="alternative splicing"/>
    <isoform>
        <id>Q91584-1</id>
        <name evidence="7">1</name>
        <sequence type="displayed"/>
    </isoform>
    <isoform>
        <id>Q91584-2</id>
        <name>2</name>
        <sequence type="described" ref="VSP_038719"/>
    </isoform>
</comment>
<comment type="tissue specificity">
    <text evidence="4 5 6 7">Expression is neural-specific in both embryos and adults. Expressed from neurula stage onwards in primary motor-, inter- and sensory-neurons. Expressed in the closing neural tube and motor neurons of stage 18 embryos, and primarily in the ventricular zone and dorsal region of the tailbud and adult brain. Expressed from stage 26 onwards in the differentiating ganglion cell layer of the retina, extending to the inner nuclear layer at later stages.</text>
</comment>
<comment type="developmental stage">
    <text evidence="4 7">Expressed by late gastrula stage (stage 11).</text>
</comment>
<comment type="induction">
    <text evidence="6">By bHLH transcription factors atoh7/ath5 and neurod1/neuroD.</text>
</comment>
<comment type="domain">
    <text evidence="1">RRM 1 and RRM 2 bind cooperatively to AU-rich sequences in target mRNAs. RRM 3 binds to poly-A mRNA sequences (By similarity).</text>
</comment>
<comment type="similarity">
    <text evidence="2">Belongs to the RRM elav family.</text>
</comment>
<feature type="chain" id="PRO_0000391373" description="ELAV-like protein 3">
    <location>
        <begin position="1"/>
        <end position="348"/>
    </location>
</feature>
<feature type="domain" description="RRM 1" evidence="3">
    <location>
        <begin position="34"/>
        <end position="112"/>
    </location>
</feature>
<feature type="domain" description="RRM 2" evidence="3">
    <location>
        <begin position="120"/>
        <end position="200"/>
    </location>
</feature>
<feature type="domain" description="RRM 3" evidence="3">
    <location>
        <begin position="265"/>
        <end position="343"/>
    </location>
</feature>
<feature type="splice variant" id="VSP_038719" description="In isoform 2." evidence="8">
    <location>
        <begin position="233"/>
        <end position="239"/>
    </location>
</feature>
<reference evidence="9 10" key="1">
    <citation type="journal article" date="1995" name="Proc. Natl. Acad. Sci. U.S.A.">
        <title>A conserved family of elav-like genes in vertebrates.</title>
        <authorList>
            <person name="Good P.J."/>
        </authorList>
    </citation>
    <scope>NUCLEOTIDE SEQUENCE [MRNA] (ISOFORM 1)</scope>
    <scope>TISSUE SPECIFICITY</scope>
    <scope>DEVELOPMENTAL STAGE</scope>
    <source>
        <tissue evidence="10">Embryonic head</tissue>
    </source>
</reference>
<reference evidence="9 11" key="2">
    <citation type="submission" date="2008-11" db="EMBL/GenBank/DDBJ databases">
        <authorList>
            <consortium name="NIH - Xenopus Gene Collection (XGC) project"/>
        </authorList>
    </citation>
    <scope>NUCLEOTIDE SEQUENCE [LARGE SCALE MRNA] (ISOFORM 2)</scope>
    <source>
        <tissue evidence="11">Gastrula</tissue>
    </source>
</reference>
<reference evidence="9" key="3">
    <citation type="journal article" date="1999" name="Mech. Dev.">
        <title>Xenopus elav-like genes are differentially expressed during neurogenesis.</title>
        <authorList>
            <person name="Perron M."/>
            <person name="Furrer M.P."/>
            <person name="Wegnez M."/>
            <person name="Theodore L."/>
        </authorList>
    </citation>
    <scope>TISSUE SPECIFICITY</scope>
    <scope>DEVELOPMENTAL STAGE</scope>
</reference>
<reference evidence="9" key="4">
    <citation type="journal article" date="2005" name="Dev. Biol.">
        <title>Identification of shared transcriptional targets for the proneural bHLH factors Xath5 and XNeuroD.</title>
        <authorList>
            <person name="Logan M.A."/>
            <person name="Steele M.R."/>
            <person name="Van Raay T.J."/>
            <person name="Vetter M.L."/>
        </authorList>
    </citation>
    <scope>TISSUE SPECIFICITY</scope>
    <scope>INDUCTION</scope>
</reference>
<reference evidence="9" key="5">
    <citation type="journal article" date="2005" name="J. Comp. Neurol.">
        <title>Comparison of the expression patterns of five neural RNA binding proteins in the Xenopus retina.</title>
        <authorList>
            <person name="Amato M.A."/>
            <person name="Boy S."/>
            <person name="Arnault E."/>
            <person name="Girard M."/>
            <person name="Della Puppa A."/>
            <person name="Sharif A."/>
            <person name="Perron M."/>
        </authorList>
    </citation>
    <scope>TISSUE SPECIFICITY</scope>
</reference>
<accession>Q91584</accession>
<accession>B7ZQD6</accession>
<proteinExistence type="evidence at transcript level"/>